<dbReference type="EMBL" id="CP000961">
    <property type="protein sequence ID" value="ACA85306.1"/>
    <property type="molecule type" value="Genomic_DNA"/>
</dbReference>
<dbReference type="RefSeq" id="WP_012323653.1">
    <property type="nucleotide sequence ID" value="NC_010506.1"/>
</dbReference>
<dbReference type="SMR" id="B1KGH8"/>
<dbReference type="STRING" id="392500.Swoo_1013"/>
<dbReference type="KEGG" id="swd:Swoo_1013"/>
<dbReference type="eggNOG" id="COG2967">
    <property type="taxonomic scope" value="Bacteria"/>
</dbReference>
<dbReference type="HOGENOM" id="CLU_128074_0_0_6"/>
<dbReference type="Proteomes" id="UP000002168">
    <property type="component" value="Chromosome"/>
</dbReference>
<dbReference type="GO" id="GO:0070987">
    <property type="term" value="P:error-free translesion synthesis"/>
    <property type="evidence" value="ECO:0007669"/>
    <property type="project" value="TreeGrafter"/>
</dbReference>
<dbReference type="Gene3D" id="2.60.40.1470">
    <property type="entry name" value="ApaG domain"/>
    <property type="match status" value="1"/>
</dbReference>
<dbReference type="HAMAP" id="MF_00791">
    <property type="entry name" value="ApaG"/>
    <property type="match status" value="1"/>
</dbReference>
<dbReference type="InterPro" id="IPR007474">
    <property type="entry name" value="ApaG_domain"/>
</dbReference>
<dbReference type="InterPro" id="IPR036767">
    <property type="entry name" value="ApaG_sf"/>
</dbReference>
<dbReference type="InterPro" id="IPR023065">
    <property type="entry name" value="Uncharacterised_ApaG"/>
</dbReference>
<dbReference type="NCBIfam" id="NF003967">
    <property type="entry name" value="PRK05461.1"/>
    <property type="match status" value="1"/>
</dbReference>
<dbReference type="PANTHER" id="PTHR14289">
    <property type="entry name" value="F-BOX ONLY PROTEIN 3"/>
    <property type="match status" value="1"/>
</dbReference>
<dbReference type="PANTHER" id="PTHR14289:SF16">
    <property type="entry name" value="POLYMERASE DELTA-INTERACTING PROTEIN 2"/>
    <property type="match status" value="1"/>
</dbReference>
<dbReference type="Pfam" id="PF04379">
    <property type="entry name" value="DUF525"/>
    <property type="match status" value="1"/>
</dbReference>
<dbReference type="SUPFAM" id="SSF110069">
    <property type="entry name" value="ApaG-like"/>
    <property type="match status" value="1"/>
</dbReference>
<dbReference type="PROSITE" id="PS51087">
    <property type="entry name" value="APAG"/>
    <property type="match status" value="1"/>
</dbReference>
<accession>B1KGH8</accession>
<name>APAG_SHEWM</name>
<organism>
    <name type="scientific">Shewanella woodyi (strain ATCC 51908 / MS32)</name>
    <dbReference type="NCBI Taxonomy" id="392500"/>
    <lineage>
        <taxon>Bacteria</taxon>
        <taxon>Pseudomonadati</taxon>
        <taxon>Pseudomonadota</taxon>
        <taxon>Gammaproteobacteria</taxon>
        <taxon>Alteromonadales</taxon>
        <taxon>Shewanellaceae</taxon>
        <taxon>Shewanella</taxon>
    </lineage>
</organism>
<sequence length="126" mass="14152">MTELETSIKIDVKTEYIEDQSSPNDERYLFRYTITIINLGKEPVTLKTRYWSITDSNQHLSVVQGAGVVGETPTIEPDTAYQYTSGTVLETPFGVMEGNYGMVTENGEMFKAKIPPFRLSIPGLLH</sequence>
<gene>
    <name evidence="1" type="primary">apaG</name>
    <name type="ordered locus">Swoo_1013</name>
</gene>
<reference key="1">
    <citation type="submission" date="2008-02" db="EMBL/GenBank/DDBJ databases">
        <title>Complete sequence of Shewanella woodyi ATCC 51908.</title>
        <authorList>
            <consortium name="US DOE Joint Genome Institute"/>
            <person name="Copeland A."/>
            <person name="Lucas S."/>
            <person name="Lapidus A."/>
            <person name="Glavina del Rio T."/>
            <person name="Dalin E."/>
            <person name="Tice H."/>
            <person name="Bruce D."/>
            <person name="Goodwin L."/>
            <person name="Pitluck S."/>
            <person name="Sims D."/>
            <person name="Brettin T."/>
            <person name="Detter J.C."/>
            <person name="Han C."/>
            <person name="Kuske C.R."/>
            <person name="Schmutz J."/>
            <person name="Larimer F."/>
            <person name="Land M."/>
            <person name="Hauser L."/>
            <person name="Kyrpides N."/>
            <person name="Lykidis A."/>
            <person name="Zhao J.-S."/>
            <person name="Richardson P."/>
        </authorList>
    </citation>
    <scope>NUCLEOTIDE SEQUENCE [LARGE SCALE GENOMIC DNA]</scope>
    <source>
        <strain>ATCC 51908 / MS32</strain>
    </source>
</reference>
<proteinExistence type="inferred from homology"/>
<protein>
    <recommendedName>
        <fullName evidence="1">Protein ApaG</fullName>
    </recommendedName>
</protein>
<evidence type="ECO:0000255" key="1">
    <source>
        <dbReference type="HAMAP-Rule" id="MF_00791"/>
    </source>
</evidence>
<feature type="chain" id="PRO_1000133816" description="Protein ApaG">
    <location>
        <begin position="1"/>
        <end position="126"/>
    </location>
</feature>
<feature type="domain" description="ApaG" evidence="1">
    <location>
        <begin position="2"/>
        <end position="126"/>
    </location>
</feature>
<keyword id="KW-1185">Reference proteome</keyword>